<comment type="function">
    <text evidence="1">Catalyzes the reversible interconversion of serine and glycine with a modified folate serving as the one-carbon carrier. Also exhibits a pteridine-independent aldolase activity toward beta-hydroxyamino acids, producing glycine and aldehydes, via a retro-aldol mechanism.</text>
</comment>
<comment type="cofactor">
    <cofactor evidence="1">
        <name>pyridoxal 5'-phosphate</name>
        <dbReference type="ChEBI" id="CHEBI:597326"/>
    </cofactor>
</comment>
<comment type="pathway">
    <text evidence="1">Amino-acid biosynthesis; glycine biosynthesis; glycine from L-serine: step 1/1.</text>
</comment>
<comment type="subunit">
    <text evidence="1">Homodimer.</text>
</comment>
<comment type="subcellular location">
    <subcellularLocation>
        <location evidence="1">Cytoplasm</location>
    </subcellularLocation>
</comment>
<comment type="similarity">
    <text evidence="1">Belongs to the SHMT family.</text>
</comment>
<proteinExistence type="inferred from homology"/>
<accession>Q8U039</accession>
<protein>
    <recommendedName>
        <fullName evidence="1">Serine hydroxymethyltransferase</fullName>
        <shortName evidence="1">SHMT</shortName>
        <shortName evidence="1">Serine methylase</shortName>
        <ecNumber evidence="1">2.1.2.-</ecNumber>
    </recommendedName>
</protein>
<keyword id="KW-0028">Amino-acid biosynthesis</keyword>
<keyword id="KW-0963">Cytoplasm</keyword>
<keyword id="KW-0554">One-carbon metabolism</keyword>
<keyword id="KW-0663">Pyridoxal phosphate</keyword>
<keyword id="KW-1185">Reference proteome</keyword>
<keyword id="KW-0808">Transferase</keyword>
<feature type="chain" id="PRO_0000113721" description="Serine hydroxymethyltransferase">
    <location>
        <begin position="1"/>
        <end position="427"/>
    </location>
</feature>
<feature type="binding site" evidence="1">
    <location>
        <begin position="120"/>
        <end position="122"/>
    </location>
    <ligand>
        <name>(6S)-5,6,7,8-tetrahydrofolate</name>
        <dbReference type="ChEBI" id="CHEBI:57453"/>
    </ligand>
</feature>
<feature type="site" description="Plays an important role in substrate specificity" evidence="1">
    <location>
        <position position="225"/>
    </location>
</feature>
<feature type="modified residue" description="N6-(pyridoxal phosphate)lysine" evidence="1">
    <location>
        <position position="226"/>
    </location>
</feature>
<reference key="1">
    <citation type="journal article" date="1999" name="Genetics">
        <title>Divergence of the hyperthermophilic archaea Pyrococcus furiosus and P. horikoshii inferred from complete genomic sequences.</title>
        <authorList>
            <person name="Maeder D.L."/>
            <person name="Weiss R.B."/>
            <person name="Dunn D.M."/>
            <person name="Cherry J.L."/>
            <person name="Gonzalez J.M."/>
            <person name="DiRuggiero J."/>
            <person name="Robb F.T."/>
        </authorList>
    </citation>
    <scope>NUCLEOTIDE SEQUENCE [LARGE SCALE GENOMIC DNA]</scope>
    <source>
        <strain>ATCC 43587 / DSM 3638 / JCM 8422 / Vc1</strain>
    </source>
</reference>
<organism>
    <name type="scientific">Pyrococcus furiosus (strain ATCC 43587 / DSM 3638 / JCM 8422 / Vc1)</name>
    <dbReference type="NCBI Taxonomy" id="186497"/>
    <lineage>
        <taxon>Archaea</taxon>
        <taxon>Methanobacteriati</taxon>
        <taxon>Methanobacteriota</taxon>
        <taxon>Thermococci</taxon>
        <taxon>Thermococcales</taxon>
        <taxon>Thermococcaceae</taxon>
        <taxon>Pyrococcus</taxon>
    </lineage>
</organism>
<evidence type="ECO:0000255" key="1">
    <source>
        <dbReference type="HAMAP-Rule" id="MF_00051"/>
    </source>
</evidence>
<name>GLYA_PYRFU</name>
<gene>
    <name evidence="1" type="primary">glyA</name>
    <name type="ordered locus">PF1778</name>
</gene>
<sequence>MTYKEYRDKVLNFIEEHEKWRSHTINLIASENITSPSVNRAVASGFMHKYAEGWPKQRYYQGCKYVDEVELIGVELFTKLFKSDYADLRPISGTNANQAVFFGLGQPGDKVIVLHTSHGGHISHMPFGAAGMRGLEVHTWPFDFESFNIDVDKAEKMIRELEPKIVMFGGSLFPFPHPVKELAPVAKEVGAFVVYDAAHVLGLIAGGEFQDPLREGADIMTASTHKTFPGPQGGVILYKKFADDETIAKLQWAIFPGVVSNHHLHHMAGKVITAAEMLEYGEAYAKQIVKNAKALAEALAEEGFKVIGEDQGYTKSHQVIVDVSDLHPAGGGWAAPLLEEAGIILNKNLLPWDPLEKVNEPSGLRIGVQEMTRVGMMEDEMREIAHFIKRVLIDKEDPKKVRKDVYYFRLEYQKVYYSFDYGLPMKE</sequence>
<dbReference type="EC" id="2.1.2.-" evidence="1"/>
<dbReference type="EMBL" id="AE009950">
    <property type="protein sequence ID" value="AAL81902.1"/>
    <property type="molecule type" value="Genomic_DNA"/>
</dbReference>
<dbReference type="RefSeq" id="WP_011012919.1">
    <property type="nucleotide sequence ID" value="NZ_CP023154.1"/>
</dbReference>
<dbReference type="SMR" id="Q8U039"/>
<dbReference type="STRING" id="186497.PF1778"/>
<dbReference type="PaxDb" id="186497-PF1778"/>
<dbReference type="GeneID" id="41713596"/>
<dbReference type="KEGG" id="pfu:PF1778"/>
<dbReference type="PATRIC" id="fig|186497.12.peg.1849"/>
<dbReference type="eggNOG" id="arCOG00070">
    <property type="taxonomic scope" value="Archaea"/>
</dbReference>
<dbReference type="HOGENOM" id="CLU_022477_2_1_2"/>
<dbReference type="OrthoDB" id="5821at2157"/>
<dbReference type="PhylomeDB" id="Q8U039"/>
<dbReference type="UniPathway" id="UPA00288">
    <property type="reaction ID" value="UER01023"/>
</dbReference>
<dbReference type="Proteomes" id="UP000001013">
    <property type="component" value="Chromosome"/>
</dbReference>
<dbReference type="GO" id="GO:0005737">
    <property type="term" value="C:cytoplasm"/>
    <property type="evidence" value="ECO:0007669"/>
    <property type="project" value="UniProtKB-SubCell"/>
</dbReference>
<dbReference type="GO" id="GO:0004372">
    <property type="term" value="F:glycine hydroxymethyltransferase activity"/>
    <property type="evidence" value="ECO:0007669"/>
    <property type="project" value="UniProtKB-UniRule"/>
</dbReference>
<dbReference type="GO" id="GO:0030170">
    <property type="term" value="F:pyridoxal phosphate binding"/>
    <property type="evidence" value="ECO:0007669"/>
    <property type="project" value="UniProtKB-UniRule"/>
</dbReference>
<dbReference type="GO" id="GO:0019264">
    <property type="term" value="P:glycine biosynthetic process from serine"/>
    <property type="evidence" value="ECO:0007669"/>
    <property type="project" value="UniProtKB-UniRule"/>
</dbReference>
<dbReference type="GO" id="GO:0035999">
    <property type="term" value="P:tetrahydrofolate interconversion"/>
    <property type="evidence" value="ECO:0007669"/>
    <property type="project" value="InterPro"/>
</dbReference>
<dbReference type="CDD" id="cd00378">
    <property type="entry name" value="SHMT"/>
    <property type="match status" value="1"/>
</dbReference>
<dbReference type="FunFam" id="3.40.640.10:FF:000101">
    <property type="entry name" value="Serine hydroxymethyltransferase"/>
    <property type="match status" value="1"/>
</dbReference>
<dbReference type="FunFam" id="3.90.1150.10:FF:000114">
    <property type="entry name" value="Serine hydroxymethyltransferase"/>
    <property type="match status" value="1"/>
</dbReference>
<dbReference type="Gene3D" id="3.90.1150.10">
    <property type="entry name" value="Aspartate Aminotransferase, domain 1"/>
    <property type="match status" value="1"/>
</dbReference>
<dbReference type="Gene3D" id="3.40.640.10">
    <property type="entry name" value="Type I PLP-dependent aspartate aminotransferase-like (Major domain)"/>
    <property type="match status" value="1"/>
</dbReference>
<dbReference type="HAMAP" id="MF_00051">
    <property type="entry name" value="SHMT"/>
    <property type="match status" value="1"/>
</dbReference>
<dbReference type="InterPro" id="IPR015424">
    <property type="entry name" value="PyrdxlP-dep_Trfase"/>
</dbReference>
<dbReference type="InterPro" id="IPR015421">
    <property type="entry name" value="PyrdxlP-dep_Trfase_major"/>
</dbReference>
<dbReference type="InterPro" id="IPR015422">
    <property type="entry name" value="PyrdxlP-dep_Trfase_small"/>
</dbReference>
<dbReference type="InterPro" id="IPR001085">
    <property type="entry name" value="Ser_HO-MeTrfase"/>
</dbReference>
<dbReference type="InterPro" id="IPR049943">
    <property type="entry name" value="Ser_HO-MeTrfase-like"/>
</dbReference>
<dbReference type="InterPro" id="IPR019798">
    <property type="entry name" value="Ser_HO-MeTrfase_PLP_BS"/>
</dbReference>
<dbReference type="InterPro" id="IPR039429">
    <property type="entry name" value="SHMT-like_dom"/>
</dbReference>
<dbReference type="NCBIfam" id="NF000586">
    <property type="entry name" value="PRK00011.1"/>
    <property type="match status" value="1"/>
</dbReference>
<dbReference type="PANTHER" id="PTHR11680">
    <property type="entry name" value="SERINE HYDROXYMETHYLTRANSFERASE"/>
    <property type="match status" value="1"/>
</dbReference>
<dbReference type="PANTHER" id="PTHR11680:SF35">
    <property type="entry name" value="SERINE HYDROXYMETHYLTRANSFERASE 1"/>
    <property type="match status" value="1"/>
</dbReference>
<dbReference type="Pfam" id="PF00464">
    <property type="entry name" value="SHMT"/>
    <property type="match status" value="1"/>
</dbReference>
<dbReference type="PIRSF" id="PIRSF000412">
    <property type="entry name" value="SHMT"/>
    <property type="match status" value="1"/>
</dbReference>
<dbReference type="SUPFAM" id="SSF53383">
    <property type="entry name" value="PLP-dependent transferases"/>
    <property type="match status" value="1"/>
</dbReference>
<dbReference type="PROSITE" id="PS00096">
    <property type="entry name" value="SHMT"/>
    <property type="match status" value="1"/>
</dbReference>